<organism>
    <name type="scientific">Salinibacter ruber (strain DSM 13855 / M31)</name>
    <dbReference type="NCBI Taxonomy" id="309807"/>
    <lineage>
        <taxon>Bacteria</taxon>
        <taxon>Pseudomonadati</taxon>
        <taxon>Rhodothermota</taxon>
        <taxon>Rhodothermia</taxon>
        <taxon>Rhodothermales</taxon>
        <taxon>Salinibacteraceae</taxon>
        <taxon>Salinibacter</taxon>
    </lineage>
</organism>
<proteinExistence type="inferred from homology"/>
<keyword id="KW-1185">Reference proteome</keyword>
<keyword id="KW-0687">Ribonucleoprotein</keyword>
<keyword id="KW-0689">Ribosomal protein</keyword>
<keyword id="KW-0694">RNA-binding</keyword>
<keyword id="KW-0699">rRNA-binding</keyword>
<keyword id="KW-0820">tRNA-binding</keyword>
<feature type="chain" id="PRO_0000241776" description="Small ribosomal subunit protein uS7">
    <location>
        <begin position="1"/>
        <end position="157"/>
    </location>
</feature>
<dbReference type="EMBL" id="CP000159">
    <property type="protein sequence ID" value="ABC44564.1"/>
    <property type="molecule type" value="Genomic_DNA"/>
</dbReference>
<dbReference type="RefSeq" id="WP_011403791.1">
    <property type="nucleotide sequence ID" value="NC_007677.1"/>
</dbReference>
<dbReference type="RefSeq" id="YP_445163.1">
    <property type="nucleotide sequence ID" value="NC_007677.1"/>
</dbReference>
<dbReference type="SMR" id="Q2S3R8"/>
<dbReference type="STRING" id="309807.SRU_1031"/>
<dbReference type="EnsemblBacteria" id="ABC44564">
    <property type="protein sequence ID" value="ABC44564"/>
    <property type="gene ID" value="SRU_1031"/>
</dbReference>
<dbReference type="GeneID" id="83727960"/>
<dbReference type="KEGG" id="sru:SRU_1031"/>
<dbReference type="PATRIC" id="fig|309807.25.peg.1069"/>
<dbReference type="eggNOG" id="COG0049">
    <property type="taxonomic scope" value="Bacteria"/>
</dbReference>
<dbReference type="HOGENOM" id="CLU_072226_1_1_10"/>
<dbReference type="OrthoDB" id="9807653at2"/>
<dbReference type="Proteomes" id="UP000008674">
    <property type="component" value="Chromosome"/>
</dbReference>
<dbReference type="GO" id="GO:0015935">
    <property type="term" value="C:small ribosomal subunit"/>
    <property type="evidence" value="ECO:0007669"/>
    <property type="project" value="InterPro"/>
</dbReference>
<dbReference type="GO" id="GO:0019843">
    <property type="term" value="F:rRNA binding"/>
    <property type="evidence" value="ECO:0007669"/>
    <property type="project" value="UniProtKB-UniRule"/>
</dbReference>
<dbReference type="GO" id="GO:0003735">
    <property type="term" value="F:structural constituent of ribosome"/>
    <property type="evidence" value="ECO:0007669"/>
    <property type="project" value="InterPro"/>
</dbReference>
<dbReference type="GO" id="GO:0000049">
    <property type="term" value="F:tRNA binding"/>
    <property type="evidence" value="ECO:0007669"/>
    <property type="project" value="UniProtKB-UniRule"/>
</dbReference>
<dbReference type="GO" id="GO:0006412">
    <property type="term" value="P:translation"/>
    <property type="evidence" value="ECO:0007669"/>
    <property type="project" value="UniProtKB-UniRule"/>
</dbReference>
<dbReference type="CDD" id="cd14869">
    <property type="entry name" value="uS7_Bacteria"/>
    <property type="match status" value="1"/>
</dbReference>
<dbReference type="FunFam" id="1.10.455.10:FF:000001">
    <property type="entry name" value="30S ribosomal protein S7"/>
    <property type="match status" value="1"/>
</dbReference>
<dbReference type="Gene3D" id="1.10.455.10">
    <property type="entry name" value="Ribosomal protein S7 domain"/>
    <property type="match status" value="1"/>
</dbReference>
<dbReference type="HAMAP" id="MF_00480_B">
    <property type="entry name" value="Ribosomal_uS7_B"/>
    <property type="match status" value="1"/>
</dbReference>
<dbReference type="InterPro" id="IPR000235">
    <property type="entry name" value="Ribosomal_uS7"/>
</dbReference>
<dbReference type="InterPro" id="IPR005717">
    <property type="entry name" value="Ribosomal_uS7_bac/org-type"/>
</dbReference>
<dbReference type="InterPro" id="IPR020606">
    <property type="entry name" value="Ribosomal_uS7_CS"/>
</dbReference>
<dbReference type="InterPro" id="IPR023798">
    <property type="entry name" value="Ribosomal_uS7_dom"/>
</dbReference>
<dbReference type="InterPro" id="IPR036823">
    <property type="entry name" value="Ribosomal_uS7_dom_sf"/>
</dbReference>
<dbReference type="NCBIfam" id="TIGR01029">
    <property type="entry name" value="rpsG_bact"/>
    <property type="match status" value="1"/>
</dbReference>
<dbReference type="PANTHER" id="PTHR11205">
    <property type="entry name" value="RIBOSOMAL PROTEIN S7"/>
    <property type="match status" value="1"/>
</dbReference>
<dbReference type="Pfam" id="PF00177">
    <property type="entry name" value="Ribosomal_S7"/>
    <property type="match status" value="1"/>
</dbReference>
<dbReference type="PIRSF" id="PIRSF002122">
    <property type="entry name" value="RPS7p_RPS7a_RPS5e_RPS7o"/>
    <property type="match status" value="1"/>
</dbReference>
<dbReference type="SUPFAM" id="SSF47973">
    <property type="entry name" value="Ribosomal protein S7"/>
    <property type="match status" value="1"/>
</dbReference>
<dbReference type="PROSITE" id="PS00052">
    <property type="entry name" value="RIBOSOMAL_S7"/>
    <property type="match status" value="1"/>
</dbReference>
<accession>Q2S3R8</accession>
<name>RS7_SALRD</name>
<sequence>MSRNEAPEQRTTQPDPVYRDDMVSRFVNAIMRDGKKSLARRIVYDTFDVIEERTGEEEGLEVFKKAVNNAAPLVEVRSRRVGGATYQVPTEVRPERRITLAFRWIIQYARARNEKSMVNRLASELVDAARGEGGAVKKKDDTHRMAESNKAFAHFQF</sequence>
<comment type="function">
    <text evidence="1">One of the primary rRNA binding proteins, it binds directly to 16S rRNA where it nucleates assembly of the head domain of the 30S subunit. Is located at the subunit interface close to the decoding center, probably blocks exit of the E-site tRNA.</text>
</comment>
<comment type="subunit">
    <text evidence="1">Part of the 30S ribosomal subunit. Contacts proteins S9 and S11.</text>
</comment>
<comment type="similarity">
    <text evidence="1">Belongs to the universal ribosomal protein uS7 family.</text>
</comment>
<reference key="1">
    <citation type="journal article" date="2005" name="Proc. Natl. Acad. Sci. U.S.A.">
        <title>The genome of Salinibacter ruber: convergence and gene exchange among hyperhalophilic bacteria and archaea.</title>
        <authorList>
            <person name="Mongodin E.F."/>
            <person name="Nelson K.E."/>
            <person name="Daugherty S."/>
            <person name="DeBoy R.T."/>
            <person name="Wister J."/>
            <person name="Khouri H."/>
            <person name="Weidman J."/>
            <person name="Walsh D.A."/>
            <person name="Papke R.T."/>
            <person name="Sanchez Perez G."/>
            <person name="Sharma A.K."/>
            <person name="Nesbo C.L."/>
            <person name="MacLeod D."/>
            <person name="Bapteste E."/>
            <person name="Doolittle W.F."/>
            <person name="Charlebois R.L."/>
            <person name="Legault B."/>
            <person name="Rodriguez-Valera F."/>
        </authorList>
    </citation>
    <scope>NUCLEOTIDE SEQUENCE [LARGE SCALE GENOMIC DNA]</scope>
    <source>
        <strain>DSM 13855 / CECT 5946 / M31</strain>
    </source>
</reference>
<protein>
    <recommendedName>
        <fullName evidence="1">Small ribosomal subunit protein uS7</fullName>
    </recommendedName>
    <alternativeName>
        <fullName evidence="2">30S ribosomal protein S7</fullName>
    </alternativeName>
</protein>
<evidence type="ECO:0000255" key="1">
    <source>
        <dbReference type="HAMAP-Rule" id="MF_00480"/>
    </source>
</evidence>
<evidence type="ECO:0000305" key="2"/>
<gene>
    <name evidence="1" type="primary">rpsG</name>
    <name type="ordered locus">SRU_1031</name>
</gene>